<organism>
    <name type="scientific">Escherichia coli O7:K1 (strain IAI39 / ExPEC)</name>
    <dbReference type="NCBI Taxonomy" id="585057"/>
    <lineage>
        <taxon>Bacteria</taxon>
        <taxon>Pseudomonadati</taxon>
        <taxon>Pseudomonadota</taxon>
        <taxon>Gammaproteobacteria</taxon>
        <taxon>Enterobacterales</taxon>
        <taxon>Enterobacteriaceae</taxon>
        <taxon>Escherichia</taxon>
    </lineage>
</organism>
<protein>
    <recommendedName>
        <fullName evidence="1">Acetylornithine deacetylase</fullName>
        <shortName evidence="1">AO</shortName>
        <shortName evidence="1">Acetylornithinase</shortName>
        <ecNumber evidence="1">3.5.1.16</ecNumber>
    </recommendedName>
    <alternativeName>
        <fullName evidence="1">N-acetylornithinase</fullName>
        <shortName evidence="1">NAO</shortName>
    </alternativeName>
</protein>
<proteinExistence type="inferred from homology"/>
<evidence type="ECO:0000255" key="1">
    <source>
        <dbReference type="HAMAP-Rule" id="MF_01108"/>
    </source>
</evidence>
<keyword id="KW-0028">Amino-acid biosynthesis</keyword>
<keyword id="KW-0055">Arginine biosynthesis</keyword>
<keyword id="KW-0170">Cobalt</keyword>
<keyword id="KW-0963">Cytoplasm</keyword>
<keyword id="KW-0378">Hydrolase</keyword>
<keyword id="KW-0479">Metal-binding</keyword>
<keyword id="KW-0862">Zinc</keyword>
<accession>B7NU43</accession>
<name>ARGE_ECO7I</name>
<feature type="chain" id="PRO_1000137063" description="Acetylornithine deacetylase">
    <location>
        <begin position="1"/>
        <end position="383"/>
    </location>
</feature>
<feature type="active site" evidence="1">
    <location>
        <position position="82"/>
    </location>
</feature>
<feature type="active site" evidence="1">
    <location>
        <position position="144"/>
    </location>
</feature>
<feature type="binding site" evidence="1">
    <location>
        <position position="80"/>
    </location>
    <ligand>
        <name>Zn(2+)</name>
        <dbReference type="ChEBI" id="CHEBI:29105"/>
        <label>1</label>
    </ligand>
</feature>
<feature type="binding site" evidence="1">
    <location>
        <position position="112"/>
    </location>
    <ligand>
        <name>Zn(2+)</name>
        <dbReference type="ChEBI" id="CHEBI:29105"/>
        <label>1</label>
    </ligand>
</feature>
<feature type="binding site" evidence="1">
    <location>
        <position position="112"/>
    </location>
    <ligand>
        <name>Zn(2+)</name>
        <dbReference type="ChEBI" id="CHEBI:29105"/>
        <label>2</label>
    </ligand>
</feature>
<feature type="binding site" evidence="1">
    <location>
        <position position="145"/>
    </location>
    <ligand>
        <name>Zn(2+)</name>
        <dbReference type="ChEBI" id="CHEBI:29105"/>
        <label>2</label>
    </ligand>
</feature>
<feature type="binding site" evidence="1">
    <location>
        <position position="169"/>
    </location>
    <ligand>
        <name>Zn(2+)</name>
        <dbReference type="ChEBI" id="CHEBI:29105"/>
        <label>1</label>
    </ligand>
</feature>
<feature type="binding site" evidence="1">
    <location>
        <position position="355"/>
    </location>
    <ligand>
        <name>Zn(2+)</name>
        <dbReference type="ChEBI" id="CHEBI:29105"/>
        <label>2</label>
    </ligand>
</feature>
<reference key="1">
    <citation type="journal article" date="2009" name="PLoS Genet.">
        <title>Organised genome dynamics in the Escherichia coli species results in highly diverse adaptive paths.</title>
        <authorList>
            <person name="Touchon M."/>
            <person name="Hoede C."/>
            <person name="Tenaillon O."/>
            <person name="Barbe V."/>
            <person name="Baeriswyl S."/>
            <person name="Bidet P."/>
            <person name="Bingen E."/>
            <person name="Bonacorsi S."/>
            <person name="Bouchier C."/>
            <person name="Bouvet O."/>
            <person name="Calteau A."/>
            <person name="Chiapello H."/>
            <person name="Clermont O."/>
            <person name="Cruveiller S."/>
            <person name="Danchin A."/>
            <person name="Diard M."/>
            <person name="Dossat C."/>
            <person name="Karoui M.E."/>
            <person name="Frapy E."/>
            <person name="Garry L."/>
            <person name="Ghigo J.M."/>
            <person name="Gilles A.M."/>
            <person name="Johnson J."/>
            <person name="Le Bouguenec C."/>
            <person name="Lescat M."/>
            <person name="Mangenot S."/>
            <person name="Martinez-Jehanne V."/>
            <person name="Matic I."/>
            <person name="Nassif X."/>
            <person name="Oztas S."/>
            <person name="Petit M.A."/>
            <person name="Pichon C."/>
            <person name="Rouy Z."/>
            <person name="Ruf C.S."/>
            <person name="Schneider D."/>
            <person name="Tourret J."/>
            <person name="Vacherie B."/>
            <person name="Vallenet D."/>
            <person name="Medigue C."/>
            <person name="Rocha E.P.C."/>
            <person name="Denamur E."/>
        </authorList>
    </citation>
    <scope>NUCLEOTIDE SEQUENCE [LARGE SCALE GENOMIC DNA]</scope>
    <source>
        <strain>IAI39 / ExPEC</strain>
    </source>
</reference>
<gene>
    <name evidence="1" type="primary">argE</name>
    <name type="ordered locus">ECIAI39_3032</name>
</gene>
<sequence>MKNKLPPFIEIYRALIATPSISATEEALDQSNADLITLLADWFKDLGFNVEVQPVPGTRNKFNMLASTGQGAGGLLLAGHTDTVPFDDGRWTRDPFTLTEHDGKLYGLGTADMKGFFAFILDALRDVDVTKLAKPLYILATADEETSMAGARYFAETTALRPDCAIIGEPTSLQPVRAHKGHISNAIRIQGQSGHSSDPARGVNAIELMHDAIGHILQLRDNLKERYHYEAFTVPYPTLNLGHIHGGDASNRICACCELHMDIRPLPGMTLNELNGLLNDALAPVSERWPGRLTVDELHPPIPGYECPPNHQLVEVVEKLLGAKTEVVNYCTEAPFIQTLCPTLVLGPGSINQAHQPDEYLETRFIKPTRELITQVIHHFCWH</sequence>
<dbReference type="EC" id="3.5.1.16" evidence="1"/>
<dbReference type="EMBL" id="CU928164">
    <property type="protein sequence ID" value="CAR19151.1"/>
    <property type="molecule type" value="Genomic_DNA"/>
</dbReference>
<dbReference type="RefSeq" id="WP_012602483.1">
    <property type="nucleotide sequence ID" value="NC_011750.1"/>
</dbReference>
<dbReference type="RefSeq" id="YP_002408962.1">
    <property type="nucleotide sequence ID" value="NC_011750.1"/>
</dbReference>
<dbReference type="SMR" id="B7NU43"/>
<dbReference type="STRING" id="585057.ECIAI39_3032"/>
<dbReference type="MEROPS" id="M20.974"/>
<dbReference type="KEGG" id="ect:ECIAI39_3032"/>
<dbReference type="PATRIC" id="fig|585057.6.peg.3144"/>
<dbReference type="HOGENOM" id="CLU_021802_2_4_6"/>
<dbReference type="UniPathway" id="UPA00068">
    <property type="reaction ID" value="UER00110"/>
</dbReference>
<dbReference type="Proteomes" id="UP000000749">
    <property type="component" value="Chromosome"/>
</dbReference>
<dbReference type="GO" id="GO:0005737">
    <property type="term" value="C:cytoplasm"/>
    <property type="evidence" value="ECO:0007669"/>
    <property type="project" value="UniProtKB-SubCell"/>
</dbReference>
<dbReference type="GO" id="GO:0008777">
    <property type="term" value="F:acetylornithine deacetylase activity"/>
    <property type="evidence" value="ECO:0007669"/>
    <property type="project" value="UniProtKB-UniRule"/>
</dbReference>
<dbReference type="GO" id="GO:0008270">
    <property type="term" value="F:zinc ion binding"/>
    <property type="evidence" value="ECO:0007669"/>
    <property type="project" value="UniProtKB-UniRule"/>
</dbReference>
<dbReference type="GO" id="GO:0006526">
    <property type="term" value="P:L-arginine biosynthetic process"/>
    <property type="evidence" value="ECO:0007669"/>
    <property type="project" value="UniProtKB-UniRule"/>
</dbReference>
<dbReference type="CDD" id="cd03894">
    <property type="entry name" value="M20_ArgE"/>
    <property type="match status" value="1"/>
</dbReference>
<dbReference type="FunFam" id="3.30.70.360:FF:000003">
    <property type="entry name" value="Acetylornithine deacetylase"/>
    <property type="match status" value="1"/>
</dbReference>
<dbReference type="Gene3D" id="3.30.70.360">
    <property type="match status" value="1"/>
</dbReference>
<dbReference type="Gene3D" id="3.40.630.10">
    <property type="entry name" value="Zn peptidases"/>
    <property type="match status" value="1"/>
</dbReference>
<dbReference type="HAMAP" id="MF_01108">
    <property type="entry name" value="ArgE"/>
    <property type="match status" value="1"/>
</dbReference>
<dbReference type="InterPro" id="IPR010169">
    <property type="entry name" value="AcOrn-deacetyl"/>
</dbReference>
<dbReference type="InterPro" id="IPR001261">
    <property type="entry name" value="ArgE/DapE_CS"/>
</dbReference>
<dbReference type="InterPro" id="IPR036264">
    <property type="entry name" value="Bact_exopeptidase_dim_dom"/>
</dbReference>
<dbReference type="InterPro" id="IPR002933">
    <property type="entry name" value="Peptidase_M20"/>
</dbReference>
<dbReference type="InterPro" id="IPR011650">
    <property type="entry name" value="Peptidase_M20_dimer"/>
</dbReference>
<dbReference type="InterPro" id="IPR050072">
    <property type="entry name" value="Peptidase_M20A"/>
</dbReference>
<dbReference type="NCBIfam" id="TIGR01892">
    <property type="entry name" value="AcOrn-deacetyl"/>
    <property type="match status" value="1"/>
</dbReference>
<dbReference type="NCBIfam" id="NF003474">
    <property type="entry name" value="PRK05111.1"/>
    <property type="match status" value="1"/>
</dbReference>
<dbReference type="PANTHER" id="PTHR43808">
    <property type="entry name" value="ACETYLORNITHINE DEACETYLASE"/>
    <property type="match status" value="1"/>
</dbReference>
<dbReference type="PANTHER" id="PTHR43808:SF1">
    <property type="entry name" value="ACETYLORNITHINE DEACETYLASE"/>
    <property type="match status" value="1"/>
</dbReference>
<dbReference type="Pfam" id="PF07687">
    <property type="entry name" value="M20_dimer"/>
    <property type="match status" value="1"/>
</dbReference>
<dbReference type="Pfam" id="PF01546">
    <property type="entry name" value="Peptidase_M20"/>
    <property type="match status" value="1"/>
</dbReference>
<dbReference type="SUPFAM" id="SSF55031">
    <property type="entry name" value="Bacterial exopeptidase dimerisation domain"/>
    <property type="match status" value="1"/>
</dbReference>
<dbReference type="SUPFAM" id="SSF53187">
    <property type="entry name" value="Zn-dependent exopeptidases"/>
    <property type="match status" value="1"/>
</dbReference>
<dbReference type="PROSITE" id="PS00758">
    <property type="entry name" value="ARGE_DAPE_CPG2_1"/>
    <property type="match status" value="1"/>
</dbReference>
<dbReference type="PROSITE" id="PS00759">
    <property type="entry name" value="ARGE_DAPE_CPG2_2"/>
    <property type="match status" value="1"/>
</dbReference>
<comment type="function">
    <text evidence="1">Catalyzes the hydrolysis of the amide bond of N(2)-acetylated L-amino acids. Cleaves the acetyl group from N-acetyl-L-ornithine to form L-ornithine, an intermediate in L-arginine biosynthesis pathway, and a branchpoint in the synthesis of polyamines.</text>
</comment>
<comment type="catalytic activity">
    <reaction evidence="1">
        <text>N(2)-acetyl-L-ornithine + H2O = L-ornithine + acetate</text>
        <dbReference type="Rhea" id="RHEA:15941"/>
        <dbReference type="ChEBI" id="CHEBI:15377"/>
        <dbReference type="ChEBI" id="CHEBI:30089"/>
        <dbReference type="ChEBI" id="CHEBI:46911"/>
        <dbReference type="ChEBI" id="CHEBI:57805"/>
        <dbReference type="EC" id="3.5.1.16"/>
    </reaction>
</comment>
<comment type="cofactor">
    <cofactor evidence="1">
        <name>Zn(2+)</name>
        <dbReference type="ChEBI" id="CHEBI:29105"/>
    </cofactor>
    <cofactor evidence="1">
        <name>Co(2+)</name>
        <dbReference type="ChEBI" id="CHEBI:48828"/>
    </cofactor>
    <text evidence="1">Binds 2 Zn(2+) or Co(2+) ions per subunit.</text>
</comment>
<comment type="cofactor">
    <cofactor evidence="1">
        <name>glutathione</name>
        <dbReference type="ChEBI" id="CHEBI:57925"/>
    </cofactor>
</comment>
<comment type="pathway">
    <text evidence="1">Amino-acid biosynthesis; L-arginine biosynthesis; L-ornithine from N(2)-acetyl-L-ornithine (linear): step 1/1.</text>
</comment>
<comment type="subunit">
    <text evidence="1">Homodimer.</text>
</comment>
<comment type="subcellular location">
    <subcellularLocation>
        <location evidence="1">Cytoplasm</location>
    </subcellularLocation>
</comment>
<comment type="similarity">
    <text evidence="1">Belongs to the peptidase M20A family. ArgE subfamily.</text>
</comment>